<gene>
    <name type="primary">Ntrk3</name>
    <name type="synonym">TrkC</name>
</gene>
<keyword id="KW-0025">Alternative splicing</keyword>
<keyword id="KW-0067">ATP-binding</keyword>
<keyword id="KW-0217">Developmental protein</keyword>
<keyword id="KW-0221">Differentiation</keyword>
<keyword id="KW-1015">Disulfide bond</keyword>
<keyword id="KW-0325">Glycoprotein</keyword>
<keyword id="KW-0393">Immunoglobulin domain</keyword>
<keyword id="KW-0418">Kinase</keyword>
<keyword id="KW-0433">Leucine-rich repeat</keyword>
<keyword id="KW-0472">Membrane</keyword>
<keyword id="KW-0524">Neurogenesis</keyword>
<keyword id="KW-0547">Nucleotide-binding</keyword>
<keyword id="KW-0597">Phosphoprotein</keyword>
<keyword id="KW-0675">Receptor</keyword>
<keyword id="KW-1185">Reference proteome</keyword>
<keyword id="KW-0677">Repeat</keyword>
<keyword id="KW-0732">Signal</keyword>
<keyword id="KW-0808">Transferase</keyword>
<keyword id="KW-0812">Transmembrane</keyword>
<keyword id="KW-1133">Transmembrane helix</keyword>
<keyword id="KW-0829">Tyrosine-protein kinase</keyword>
<sequence length="825" mass="92760">MDVSLCPAKCSFWRIFLLGSVWLDYVGSVLACPANCVCSKTEINCRRPDDGNLFPLLEGQDSGNSNGNASINITDISRNITSIHIENWRGLHTLNAVDMELYTGLQKLTIKNSGLRNIQPRAFAKNPHLRYINLSSNRLTTLSWQLFQTLSLRELRLEQNFFNCSCDIRWMQLWQEQGEARLDSQSLYCISADGSQLPLFRMNISQCDLPEISVSHVNLTVREGDNAVITCNGSGSPLPDVDWIVTGLQSINTHQTNLNWTNVHAINLTLVNVTSEDNGFTLTCIAENVVGMSNASVALTVYYPPRVVSLVEPEVRLEHCIEFVVRGNPTPTLHWLYNGQPLRESKIIHMDYYQEGEVSEGCLLFNKPTHYNNGNYTLIAKNALGTANQTINGHFLKEPFPESTDFFDFESDASPTPPITVTHKPEEDTFGVSIAVGLAAFACVLLVVLFIMINKYGRRSKFGMKGPVAVISGEEDSASPLHHINHGITTPSSLDAGPDTVVIGMTRIPVIENPQYFRQGHNCHKPDTYVQHIKRRDIVLKRELGEGAFGKVFLAECYNLSPTKDKMLVAVKALKDPTLAARKDFQREAELLTNLQHEHIVKFYGVCGDGDPLIMVFEYMKHGDLNKFLRAHGPDAMILVDGQPRQAKGELGLSQMLHIASQIASGMVYLASQHFVHRDLATRNCLVGANLLVKIGDFGMSRDVYSTDYYRVGGHTMLPIRWMPPESIMYRKFTTESDVWSFGVILWEIFTYGKQPWFQLSNTEVIECITQGRVLERPRVCPKEVYDVMLGCWQREPQQRLNIKEIYKILHALGKATPIYLDILG</sequence>
<organism>
    <name type="scientific">Mus musculus</name>
    <name type="common">Mouse</name>
    <dbReference type="NCBI Taxonomy" id="10090"/>
    <lineage>
        <taxon>Eukaryota</taxon>
        <taxon>Metazoa</taxon>
        <taxon>Chordata</taxon>
        <taxon>Craniata</taxon>
        <taxon>Vertebrata</taxon>
        <taxon>Euteleostomi</taxon>
        <taxon>Mammalia</taxon>
        <taxon>Eutheria</taxon>
        <taxon>Euarchontoglires</taxon>
        <taxon>Glires</taxon>
        <taxon>Rodentia</taxon>
        <taxon>Myomorpha</taxon>
        <taxon>Muroidea</taxon>
        <taxon>Muridae</taxon>
        <taxon>Murinae</taxon>
        <taxon>Mus</taxon>
        <taxon>Mus</taxon>
    </lineage>
</organism>
<accession>Q6VNS1</accession>
<accession>A4QPD0</accession>
<accession>Q9Z2P9</accession>
<accession>Q9Z2Q0</accession>
<proteinExistence type="evidence at protein level"/>
<protein>
    <recommendedName>
        <fullName>NT-3 growth factor receptor</fullName>
        <ecNumber>2.7.10.1</ecNumber>
    </recommendedName>
    <alternativeName>
        <fullName>GP145-TrkC</fullName>
        <shortName>Trk-C</shortName>
    </alternativeName>
    <alternativeName>
        <fullName>Neurotrophic tyrosine kinase receptor type 3</fullName>
    </alternativeName>
    <alternativeName>
        <fullName>TrkC tyrosine kinase</fullName>
    </alternativeName>
</protein>
<name>NTRK3_MOUSE</name>
<comment type="function">
    <text evidence="4">Receptor tyrosine kinase involved in nervous system and probably heart development. Upon binding of its ligand NTF3/neurotrophin-3, NTRK3 autophosphorylates and activates different signaling pathways, including the phosphatidylinositol 3-kinase/AKT and the MAPK pathways, that control cell survival and differentiation.</text>
</comment>
<comment type="catalytic activity">
    <reaction evidence="9">
        <text>L-tyrosyl-[protein] + ATP = O-phospho-L-tyrosyl-[protein] + ADP + H(+)</text>
        <dbReference type="Rhea" id="RHEA:10596"/>
        <dbReference type="Rhea" id="RHEA-COMP:10136"/>
        <dbReference type="Rhea" id="RHEA-COMP:20101"/>
        <dbReference type="ChEBI" id="CHEBI:15378"/>
        <dbReference type="ChEBI" id="CHEBI:30616"/>
        <dbReference type="ChEBI" id="CHEBI:46858"/>
        <dbReference type="ChEBI" id="CHEBI:61978"/>
        <dbReference type="ChEBI" id="CHEBI:456216"/>
        <dbReference type="EC" id="2.7.10.1"/>
    </reaction>
</comment>
<comment type="subunit">
    <text evidence="2 3 11">Exists in a dynamic equilibrium between monomeric (low affinity) and dimeric (high affinity) structures (By similarity). Binds SH2B2. Interacts with SQSTM1 and KIDINS220 (By similarity). Interacts with PTPRS (PubMed:25385546). Interacts with MAPK8IP3/JIP3 (By similarity).</text>
</comment>
<comment type="interaction">
    <interactant intactId="EBI-16744951">
        <id>Q6VNS1</id>
    </interactant>
    <interactant intactId="EBI-20585476">
        <id>Q2MHE5</id>
        <label>Dok6</label>
    </interactant>
    <organismsDiffer>false</organismsDiffer>
    <experiments>3</experiments>
</comment>
<comment type="interaction">
    <interactant intactId="EBI-16744951">
        <id>Q6VNS1</id>
    </interactant>
    <interactant intactId="EBI-1798780">
        <id>P16056</id>
        <label>Met</label>
    </interactant>
    <organismsDiffer>false</organismsDiffer>
    <experiments>5</experiments>
</comment>
<comment type="subcellular location">
    <subcellularLocation>
        <location evidence="1">Membrane</location>
        <topology evidence="1">Single-pass type I membrane protein</topology>
    </subcellularLocation>
</comment>
<comment type="alternative products">
    <event type="alternative splicing"/>
    <isoform>
        <id>Q6VNS1-1</id>
        <name>1</name>
        <sequence type="displayed"/>
    </isoform>
    <isoform>
        <id>Q6VNS1-2</id>
        <name>2</name>
        <name>TrkC NC1</name>
        <sequence type="described" ref="VSP_021596 VSP_021597"/>
    </isoform>
    <isoform>
        <id>Q6VNS1-3</id>
        <name>3</name>
        <name>TrkC NC2</name>
        <sequence type="described" ref="VSP_021598 VSP_021599"/>
    </isoform>
</comment>
<comment type="tissue specificity">
    <text evidence="12">Isoform 2 expression is restricted to specific areas in adult brain. Isoform 3 transcripts are readily detected early during embryogenesis and are expressed predominantly in adult brain and gonads.</text>
</comment>
<comment type="induction">
    <text evidence="10">Expression oscillates in a circadian manner in the liver.</text>
</comment>
<comment type="PTM">
    <text evidence="1">Ligand-mediated auto-phosphorylation.</text>
</comment>
<comment type="miscellaneous">
    <molecule>Isoform 2</molecule>
    <text evidence="15">Non-catalytic.</text>
</comment>
<comment type="miscellaneous">
    <molecule>Isoform 3</molecule>
    <text evidence="15">Non-catalytic.</text>
</comment>
<comment type="similarity">
    <text evidence="8">Belongs to the protein kinase superfamily. Tyr protein kinase family. Insulin receptor subfamily.</text>
</comment>
<evidence type="ECO:0000250" key="1"/>
<evidence type="ECO:0000250" key="2">
    <source>
        <dbReference type="UniProtKB" id="P04629"/>
    </source>
</evidence>
<evidence type="ECO:0000250" key="3">
    <source>
        <dbReference type="UniProtKB" id="Q03351"/>
    </source>
</evidence>
<evidence type="ECO:0000250" key="4">
    <source>
        <dbReference type="UniProtKB" id="Q16288"/>
    </source>
</evidence>
<evidence type="ECO:0000250" key="5">
    <source>
        <dbReference type="UniProtKB" id="Q91044"/>
    </source>
</evidence>
<evidence type="ECO:0000255" key="6"/>
<evidence type="ECO:0000255" key="7">
    <source>
        <dbReference type="PROSITE-ProRule" id="PRU00114"/>
    </source>
</evidence>
<evidence type="ECO:0000255" key="8">
    <source>
        <dbReference type="PROSITE-ProRule" id="PRU00159"/>
    </source>
</evidence>
<evidence type="ECO:0000255" key="9">
    <source>
        <dbReference type="PROSITE-ProRule" id="PRU10028"/>
    </source>
</evidence>
<evidence type="ECO:0000269" key="10">
    <source>
    </source>
</evidence>
<evidence type="ECO:0000269" key="11">
    <source>
    </source>
</evidence>
<evidence type="ECO:0000269" key="12">
    <source>
    </source>
</evidence>
<evidence type="ECO:0000303" key="13">
    <source>
    </source>
</evidence>
<evidence type="ECO:0000303" key="14">
    <source>
    </source>
</evidence>
<evidence type="ECO:0000305" key="15"/>
<evidence type="ECO:0007744" key="16">
    <source>
    </source>
</evidence>
<evidence type="ECO:0007744" key="17">
    <source>
    </source>
</evidence>
<feature type="signal peptide" evidence="1">
    <location>
        <begin position="1"/>
        <end position="31"/>
    </location>
</feature>
<feature type="chain" id="PRO_0000260434" description="NT-3 growth factor receptor">
    <location>
        <begin position="32"/>
        <end position="825"/>
    </location>
</feature>
<feature type="topological domain" description="Extracellular" evidence="6">
    <location>
        <begin position="32"/>
        <end position="429"/>
    </location>
</feature>
<feature type="transmembrane region" description="Helical" evidence="6">
    <location>
        <begin position="430"/>
        <end position="453"/>
    </location>
</feature>
<feature type="topological domain" description="Cytoplasmic" evidence="6">
    <location>
        <begin position="454"/>
        <end position="825"/>
    </location>
</feature>
<feature type="repeat" description="LRR 1">
    <location>
        <begin position="104"/>
        <end position="125"/>
    </location>
</feature>
<feature type="repeat" description="LRR 2">
    <location>
        <begin position="128"/>
        <end position="149"/>
    </location>
</feature>
<feature type="domain" description="LRRCT">
    <location>
        <begin position="160"/>
        <end position="209"/>
    </location>
</feature>
<feature type="domain" description="Ig-like C2-type 1">
    <location>
        <begin position="210"/>
        <end position="300"/>
    </location>
</feature>
<feature type="domain" description="Ig-like C2-type 2">
    <location>
        <begin position="309"/>
        <end position="382"/>
    </location>
</feature>
<feature type="domain" description="Protein kinase" evidence="8">
    <location>
        <begin position="538"/>
        <end position="825"/>
    </location>
</feature>
<feature type="active site" description="Proton acceptor" evidence="8 9">
    <location>
        <position position="679"/>
    </location>
</feature>
<feature type="binding site" evidence="8">
    <location>
        <begin position="544"/>
        <end position="552"/>
    </location>
    <ligand>
        <name>ATP</name>
        <dbReference type="ChEBI" id="CHEBI:30616"/>
    </ligand>
</feature>
<feature type="binding site" evidence="8">
    <location>
        <position position="572"/>
    </location>
    <ligand>
        <name>ATP</name>
        <dbReference type="ChEBI" id="CHEBI:30616"/>
    </ligand>
</feature>
<feature type="site" description="Interaction with SHC1" evidence="1">
    <location>
        <position position="516"/>
    </location>
</feature>
<feature type="site" description="Interaction with PLC-gamma-1" evidence="1">
    <location>
        <position position="820"/>
    </location>
</feature>
<feature type="modified residue" description="Phosphoserine" evidence="17">
    <location>
        <position position="493"/>
    </location>
</feature>
<feature type="modified residue" description="Phosphotyrosine" evidence="16">
    <location>
        <position position="516"/>
    </location>
</feature>
<feature type="modified residue" description="Phosphotyrosine; by autocatalysis" evidence="1">
    <location>
        <position position="705"/>
    </location>
</feature>
<feature type="modified residue" description="Phosphotyrosine; by autocatalysis" evidence="1">
    <location>
        <position position="709"/>
    </location>
</feature>
<feature type="modified residue" description="Phosphotyrosine; by autocatalysis" evidence="1">
    <location>
        <position position="710"/>
    </location>
</feature>
<feature type="glycosylation site" description="N-linked (GlcNAc...) asparagine" evidence="6">
    <location>
        <position position="68"/>
    </location>
</feature>
<feature type="glycosylation site" description="N-linked (GlcNAc...) asparagine" evidence="6">
    <location>
        <position position="72"/>
    </location>
</feature>
<feature type="glycosylation site" description="N-linked (GlcNAc...) asparagine" evidence="6">
    <location>
        <position position="79"/>
    </location>
</feature>
<feature type="glycosylation site" description="N-linked (GlcNAc...) asparagine" evidence="6">
    <location>
        <position position="133"/>
    </location>
</feature>
<feature type="glycosylation site" description="N-linked (GlcNAc...) asparagine" evidence="6">
    <location>
        <position position="163"/>
    </location>
</feature>
<feature type="glycosylation site" description="N-linked (GlcNAc...) asparagine" evidence="6">
    <location>
        <position position="203"/>
    </location>
</feature>
<feature type="glycosylation site" description="N-linked (GlcNAc...) asparagine" evidence="6">
    <location>
        <position position="218"/>
    </location>
</feature>
<feature type="glycosylation site" description="N-linked (GlcNAc...) asparagine" evidence="6">
    <location>
        <position position="232"/>
    </location>
</feature>
<feature type="glycosylation site" description="N-linked (GlcNAc...) asparagine" evidence="6">
    <location>
        <position position="259"/>
    </location>
</feature>
<feature type="glycosylation site" description="N-linked (GlcNAc...) asparagine" evidence="6">
    <location>
        <position position="267"/>
    </location>
</feature>
<feature type="glycosylation site" description="N-linked (GlcNAc...) asparagine" evidence="6">
    <location>
        <position position="272"/>
    </location>
</feature>
<feature type="glycosylation site" description="N-linked (GlcNAc...) asparagine" evidence="6">
    <location>
        <position position="294"/>
    </location>
</feature>
<feature type="glycosylation site" description="N-linked (GlcNAc...) asparagine" evidence="6">
    <location>
        <position position="375"/>
    </location>
</feature>
<feature type="glycosylation site" description="N-linked (GlcNAc...) asparagine" evidence="6">
    <location>
        <position position="388"/>
    </location>
</feature>
<feature type="disulfide bond" evidence="5">
    <location>
        <begin position="32"/>
        <end position="38"/>
    </location>
</feature>
<feature type="disulfide bond" evidence="5">
    <location>
        <begin position="36"/>
        <end position="45"/>
    </location>
</feature>
<feature type="disulfide bond" evidence="5">
    <location>
        <begin position="164"/>
        <end position="189"/>
    </location>
</feature>
<feature type="disulfide bond" evidence="5">
    <location>
        <begin position="166"/>
        <end position="207"/>
    </location>
</feature>
<feature type="disulfide bond" evidence="5">
    <location>
        <begin position="231"/>
        <end position="284"/>
    </location>
</feature>
<feature type="disulfide bond" evidence="7">
    <location>
        <begin position="320"/>
        <end position="362"/>
    </location>
</feature>
<feature type="splice variant" id="VSP_021596" description="In isoform 2." evidence="14">
    <original>PVAVISGEEDSASPLHHINHGITTPSSLDAGPDTVV</original>
    <variation>KVLFFQSQEFHGFHLLIKRYCTSICSLRKPLVTGPW</variation>
    <location>
        <begin position="467"/>
        <end position="502"/>
    </location>
</feature>
<feature type="splice variant" id="VSP_021597" description="In isoform 2." evidence="14">
    <location>
        <begin position="503"/>
        <end position="825"/>
    </location>
</feature>
<feature type="splice variant" id="VSP_021598" description="In isoform 3." evidence="13 14">
    <original>YVQHIKRRDIVLKRELGEGAFGKVFLAECYNLSPTKDKMLVAVKALKDPTLAARKDFQREAELLTNLQHEHIVKFYGVCGDGDP</original>
    <variation>WVFSNIDNHGILNLKDNRDHLVPSTHYIYEEPEVQSGDVSYPRSHGFREIMLNPISLSGHSKPLNHGIYVEDVNVYFSKGRHGF</variation>
    <location>
        <begin position="529"/>
        <end position="612"/>
    </location>
</feature>
<feature type="splice variant" id="VSP_021599" description="In isoform 3." evidence="13 14">
    <location>
        <begin position="613"/>
        <end position="825"/>
    </location>
</feature>
<feature type="sequence conflict" description="In Ref. 2; AAC72289." evidence="15" ref="2">
    <original>N</original>
    <variation>K</variation>
    <location>
        <position position="366"/>
    </location>
</feature>
<dbReference type="EC" id="2.7.10.1"/>
<dbReference type="EMBL" id="AY336094">
    <property type="protein sequence ID" value="AAP94280.1"/>
    <property type="molecule type" value="mRNA"/>
</dbReference>
<dbReference type="EMBL" id="AF035399">
    <property type="protein sequence ID" value="AAC72289.1"/>
    <property type="molecule type" value="mRNA"/>
</dbReference>
<dbReference type="EMBL" id="AF035400">
    <property type="protein sequence ID" value="AAC72290.1"/>
    <property type="molecule type" value="mRNA"/>
</dbReference>
<dbReference type="EMBL" id="BC139764">
    <property type="protein sequence ID" value="AAI39765.1"/>
    <property type="molecule type" value="mRNA"/>
</dbReference>
<dbReference type="CCDS" id="CCDS21371.1">
    <molecule id="Q6VNS1-1"/>
</dbReference>
<dbReference type="CCDS" id="CCDS21372.1">
    <molecule id="Q6VNS1-3"/>
</dbReference>
<dbReference type="RefSeq" id="NP_032772.3">
    <molecule id="Q6VNS1-1"/>
    <property type="nucleotide sequence ID" value="NM_008746.5"/>
</dbReference>
<dbReference type="RefSeq" id="NP_877961.1">
    <molecule id="Q6VNS1-3"/>
    <property type="nucleotide sequence ID" value="NM_182809.2"/>
</dbReference>
<dbReference type="SMR" id="Q6VNS1"/>
<dbReference type="BioGRID" id="201870">
    <property type="interactions" value="4"/>
</dbReference>
<dbReference type="FunCoup" id="Q6VNS1">
    <property type="interactions" value="873"/>
</dbReference>
<dbReference type="IntAct" id="Q6VNS1">
    <property type="interactions" value="3"/>
</dbReference>
<dbReference type="MINT" id="Q6VNS1"/>
<dbReference type="STRING" id="10090.ENSMUSP00000037909"/>
<dbReference type="ChEMBL" id="CHEMBL2791"/>
<dbReference type="GlyConnect" id="2805">
    <property type="glycosylation" value="5 N-Linked glycans (3 sites)"/>
</dbReference>
<dbReference type="GlyCosmos" id="Q6VNS1">
    <property type="glycosylation" value="14 sites, 5 glycans"/>
</dbReference>
<dbReference type="GlyGen" id="Q6VNS1">
    <property type="glycosylation" value="16 sites, 12 N-linked glycans (8 sites), 1 O-linked glycan (1 site)"/>
</dbReference>
<dbReference type="iPTMnet" id="Q6VNS1"/>
<dbReference type="PhosphoSitePlus" id="Q6VNS1"/>
<dbReference type="jPOST" id="Q6VNS1"/>
<dbReference type="PaxDb" id="10090-ENSMUSP00000037909"/>
<dbReference type="PeptideAtlas" id="Q6VNS1"/>
<dbReference type="ProteomicsDB" id="287838">
    <molecule id="Q6VNS1-1"/>
</dbReference>
<dbReference type="ProteomicsDB" id="287839">
    <molecule id="Q6VNS1-2"/>
</dbReference>
<dbReference type="ProteomicsDB" id="287840">
    <molecule id="Q6VNS1-3"/>
</dbReference>
<dbReference type="Antibodypedia" id="3979">
    <property type="antibodies" value="850 antibodies from 42 providers"/>
</dbReference>
<dbReference type="DNASU" id="18213"/>
<dbReference type="Ensembl" id="ENSMUST00000039431.14">
    <molecule id="Q6VNS1-1"/>
    <property type="protein sequence ID" value="ENSMUSP00000037909.8"/>
    <property type="gene ID" value="ENSMUSG00000059146.13"/>
</dbReference>
<dbReference type="Ensembl" id="ENSMUST00000039438.9">
    <molecule id="Q6VNS1-3"/>
    <property type="protein sequence ID" value="ENSMUSP00000038324.8"/>
    <property type="gene ID" value="ENSMUSG00000059146.13"/>
</dbReference>
<dbReference type="GeneID" id="18213"/>
<dbReference type="KEGG" id="mmu:18213"/>
<dbReference type="UCSC" id="uc009hxf.2">
    <molecule id="Q6VNS1-1"/>
    <property type="organism name" value="mouse"/>
</dbReference>
<dbReference type="UCSC" id="uc009hxh.2">
    <molecule id="Q6VNS1-3"/>
    <property type="organism name" value="mouse"/>
</dbReference>
<dbReference type="UCSC" id="uc009hxi.2">
    <molecule id="Q6VNS1-2"/>
    <property type="organism name" value="mouse"/>
</dbReference>
<dbReference type="AGR" id="MGI:97385"/>
<dbReference type="CTD" id="4916"/>
<dbReference type="MGI" id="MGI:97385">
    <property type="gene designation" value="Ntrk3"/>
</dbReference>
<dbReference type="VEuPathDB" id="HostDB:ENSMUSG00000059146"/>
<dbReference type="eggNOG" id="KOG1026">
    <property type="taxonomic scope" value="Eukaryota"/>
</dbReference>
<dbReference type="GeneTree" id="ENSGT00940000155645"/>
<dbReference type="HOGENOM" id="CLU_000288_74_1_1"/>
<dbReference type="InParanoid" id="Q6VNS1"/>
<dbReference type="OMA" id="YREVTHP"/>
<dbReference type="PhylomeDB" id="Q6VNS1"/>
<dbReference type="TreeFam" id="TF106465"/>
<dbReference type="Reactome" id="R-MMU-1257604">
    <property type="pathway name" value="PIP3 activates AKT signaling"/>
</dbReference>
<dbReference type="Reactome" id="R-MMU-388844">
    <property type="pathway name" value="Receptor-type tyrosine-protein phosphatases"/>
</dbReference>
<dbReference type="Reactome" id="R-MMU-6811558">
    <property type="pathway name" value="PI5P, PP2A and IER3 Regulate PI3K/AKT Signaling"/>
</dbReference>
<dbReference type="Reactome" id="R-MMU-9034013">
    <property type="pathway name" value="NTF3 activates NTRK3 signaling"/>
</dbReference>
<dbReference type="Reactome" id="R-MMU-9034793">
    <property type="pathway name" value="Activated NTRK3 signals through PLCG1"/>
</dbReference>
<dbReference type="Reactome" id="R-MMU-9603381">
    <property type="pathway name" value="Activated NTRK3 signals through PI3K"/>
</dbReference>
<dbReference type="BioGRID-ORCS" id="18213">
    <property type="hits" value="1 hit in 79 CRISPR screens"/>
</dbReference>
<dbReference type="ChiTaRS" id="Ntrk3">
    <property type="organism name" value="mouse"/>
</dbReference>
<dbReference type="PRO" id="PR:Q6VNS1"/>
<dbReference type="Proteomes" id="UP000000589">
    <property type="component" value="Chromosome 7"/>
</dbReference>
<dbReference type="RNAct" id="Q6VNS1">
    <property type="molecule type" value="protein"/>
</dbReference>
<dbReference type="Bgee" id="ENSMUSG00000059146">
    <property type="expression patterns" value="Expressed in ascending aorta and 245 other cell types or tissues"/>
</dbReference>
<dbReference type="ExpressionAtlas" id="Q6VNS1">
    <property type="expression patterns" value="baseline and differential"/>
</dbReference>
<dbReference type="GO" id="GO:0005737">
    <property type="term" value="C:cytoplasm"/>
    <property type="evidence" value="ECO:0000314"/>
    <property type="project" value="MGI"/>
</dbReference>
<dbReference type="GO" id="GO:0005829">
    <property type="term" value="C:cytosol"/>
    <property type="evidence" value="ECO:0000304"/>
    <property type="project" value="Reactome"/>
</dbReference>
<dbReference type="GO" id="GO:0098978">
    <property type="term" value="C:glutamatergic synapse"/>
    <property type="evidence" value="ECO:0007669"/>
    <property type="project" value="Ensembl"/>
</dbReference>
<dbReference type="GO" id="GO:0005741">
    <property type="term" value="C:mitochondrial outer membrane"/>
    <property type="evidence" value="ECO:0000304"/>
    <property type="project" value="Reactome"/>
</dbReference>
<dbReference type="GO" id="GO:0005886">
    <property type="term" value="C:plasma membrane"/>
    <property type="evidence" value="ECO:0000304"/>
    <property type="project" value="Reactome"/>
</dbReference>
<dbReference type="GO" id="GO:0045211">
    <property type="term" value="C:postsynaptic membrane"/>
    <property type="evidence" value="ECO:0007669"/>
    <property type="project" value="Ensembl"/>
</dbReference>
<dbReference type="GO" id="GO:0043235">
    <property type="term" value="C:receptor complex"/>
    <property type="evidence" value="ECO:0000266"/>
    <property type="project" value="MGI"/>
</dbReference>
<dbReference type="GO" id="GO:0005524">
    <property type="term" value="F:ATP binding"/>
    <property type="evidence" value="ECO:0007669"/>
    <property type="project" value="UniProtKB-KW"/>
</dbReference>
<dbReference type="GO" id="GO:0005004">
    <property type="term" value="F:GPI-linked ephrin receptor activity"/>
    <property type="evidence" value="ECO:0007669"/>
    <property type="project" value="Ensembl"/>
</dbReference>
<dbReference type="GO" id="GO:0005030">
    <property type="term" value="F:neurotrophin receptor activity"/>
    <property type="evidence" value="ECO:0007669"/>
    <property type="project" value="Ensembl"/>
</dbReference>
<dbReference type="GO" id="GO:0002039">
    <property type="term" value="F:p53 binding"/>
    <property type="evidence" value="ECO:0007669"/>
    <property type="project" value="Ensembl"/>
</dbReference>
<dbReference type="GO" id="GO:0048677">
    <property type="term" value="P:axon extension involved in regeneration"/>
    <property type="evidence" value="ECO:0000316"/>
    <property type="project" value="MGI"/>
</dbReference>
<dbReference type="GO" id="GO:0071300">
    <property type="term" value="P:cellular response to retinoic acid"/>
    <property type="evidence" value="ECO:0007669"/>
    <property type="project" value="Ensembl"/>
</dbReference>
<dbReference type="GO" id="GO:0007623">
    <property type="term" value="P:circadian rhythm"/>
    <property type="evidence" value="ECO:0000270"/>
    <property type="project" value="UniProtKB"/>
</dbReference>
<dbReference type="GO" id="GO:0090102">
    <property type="term" value="P:cochlea development"/>
    <property type="evidence" value="ECO:0007669"/>
    <property type="project" value="Ensembl"/>
</dbReference>
<dbReference type="GO" id="GO:0007507">
    <property type="term" value="P:heart development"/>
    <property type="evidence" value="ECO:0000250"/>
    <property type="project" value="UniProtKB"/>
</dbReference>
<dbReference type="GO" id="GO:0070306">
    <property type="term" value="P:lens fiber cell differentiation"/>
    <property type="evidence" value="ECO:0000316"/>
    <property type="project" value="MGI"/>
</dbReference>
<dbReference type="GO" id="GO:0042490">
    <property type="term" value="P:mechanoreceptor differentiation"/>
    <property type="evidence" value="ECO:0000315"/>
    <property type="project" value="MGI"/>
</dbReference>
<dbReference type="GO" id="GO:0022011">
    <property type="term" value="P:myelination in peripheral nervous system"/>
    <property type="evidence" value="ECO:0000316"/>
    <property type="project" value="MGI"/>
</dbReference>
<dbReference type="GO" id="GO:0048712">
    <property type="term" value="P:negative regulation of astrocyte differentiation"/>
    <property type="evidence" value="ECO:0007669"/>
    <property type="project" value="Ensembl"/>
</dbReference>
<dbReference type="GO" id="GO:0048665">
    <property type="term" value="P:neuron fate specification"/>
    <property type="evidence" value="ECO:0007669"/>
    <property type="project" value="Ensembl"/>
</dbReference>
<dbReference type="GO" id="GO:0001764">
    <property type="term" value="P:neuron migration"/>
    <property type="evidence" value="ECO:0007669"/>
    <property type="project" value="Ensembl"/>
</dbReference>
<dbReference type="GO" id="GO:0019227">
    <property type="term" value="P:neuronal action potential propagation"/>
    <property type="evidence" value="ECO:0000316"/>
    <property type="project" value="MGI"/>
</dbReference>
<dbReference type="GO" id="GO:0043065">
    <property type="term" value="P:positive regulation of apoptotic process"/>
    <property type="evidence" value="ECO:0000314"/>
    <property type="project" value="MGI"/>
</dbReference>
<dbReference type="GO" id="GO:0048691">
    <property type="term" value="P:positive regulation of axon extension involved in regeneration"/>
    <property type="evidence" value="ECO:0000316"/>
    <property type="project" value="MGI"/>
</dbReference>
<dbReference type="GO" id="GO:0030335">
    <property type="term" value="P:positive regulation of cell migration"/>
    <property type="evidence" value="ECO:0007669"/>
    <property type="project" value="Ensembl"/>
</dbReference>
<dbReference type="GO" id="GO:0008284">
    <property type="term" value="P:positive regulation of cell population proliferation"/>
    <property type="evidence" value="ECO:0007669"/>
    <property type="project" value="Ensembl"/>
</dbReference>
<dbReference type="GO" id="GO:0010628">
    <property type="term" value="P:positive regulation of gene expression"/>
    <property type="evidence" value="ECO:0007669"/>
    <property type="project" value="Ensembl"/>
</dbReference>
<dbReference type="GO" id="GO:0043410">
    <property type="term" value="P:positive regulation of MAPK cascade"/>
    <property type="evidence" value="ECO:0007669"/>
    <property type="project" value="Ensembl"/>
</dbReference>
<dbReference type="GO" id="GO:0051897">
    <property type="term" value="P:positive regulation of phosphatidylinositol 3-kinase/protein kinase B signal transduction"/>
    <property type="evidence" value="ECO:0007669"/>
    <property type="project" value="Ensembl"/>
</dbReference>
<dbReference type="GO" id="GO:0050927">
    <property type="term" value="P:positive regulation of positive chemotaxis"/>
    <property type="evidence" value="ECO:0007669"/>
    <property type="project" value="Ensembl"/>
</dbReference>
<dbReference type="GO" id="GO:0051965">
    <property type="term" value="P:positive regulation of synapse assembly"/>
    <property type="evidence" value="ECO:0000314"/>
    <property type="project" value="MGI"/>
</dbReference>
<dbReference type="GO" id="GO:0097107">
    <property type="term" value="P:postsynaptic density assembly"/>
    <property type="evidence" value="ECO:0007669"/>
    <property type="project" value="Ensembl"/>
</dbReference>
<dbReference type="GO" id="GO:2000177">
    <property type="term" value="P:regulation of neural precursor cell proliferation"/>
    <property type="evidence" value="ECO:0007669"/>
    <property type="project" value="Ensembl"/>
</dbReference>
<dbReference type="GO" id="GO:1905606">
    <property type="term" value="P:regulation of presynapse assembly"/>
    <property type="evidence" value="ECO:0007669"/>
    <property type="project" value="Ensembl"/>
</dbReference>
<dbReference type="GO" id="GO:0051412">
    <property type="term" value="P:response to corticosterone"/>
    <property type="evidence" value="ECO:0007669"/>
    <property type="project" value="Ensembl"/>
</dbReference>
<dbReference type="GO" id="GO:0045471">
    <property type="term" value="P:response to ethanol"/>
    <property type="evidence" value="ECO:0007669"/>
    <property type="project" value="Ensembl"/>
</dbReference>
<dbReference type="CDD" id="cd04971">
    <property type="entry name" value="IgI_TrKABC_d5"/>
    <property type="match status" value="1"/>
</dbReference>
<dbReference type="CDD" id="cd05094">
    <property type="entry name" value="PTKc_TrkC"/>
    <property type="match status" value="1"/>
</dbReference>
<dbReference type="FunFam" id="1.10.510.10:FF:000701">
    <property type="entry name" value="Tyrosine-protein kinase receptor"/>
    <property type="match status" value="1"/>
</dbReference>
<dbReference type="FunFam" id="2.60.40.10:FF:000251">
    <property type="entry name" value="Tyrosine-protein kinase receptor"/>
    <property type="match status" value="1"/>
</dbReference>
<dbReference type="FunFam" id="2.60.40.10:FF:000265">
    <property type="entry name" value="Tyrosine-protein kinase receptor"/>
    <property type="match status" value="1"/>
</dbReference>
<dbReference type="FunFam" id="3.30.200.20:FF:000033">
    <property type="entry name" value="Tyrosine-protein kinase receptor"/>
    <property type="match status" value="1"/>
</dbReference>
<dbReference type="FunFam" id="3.80.10.10:FF:000035">
    <property type="entry name" value="Tyrosine-protein kinase receptor"/>
    <property type="match status" value="1"/>
</dbReference>
<dbReference type="Gene3D" id="2.60.40.10">
    <property type="entry name" value="Immunoglobulins"/>
    <property type="match status" value="2"/>
</dbReference>
<dbReference type="Gene3D" id="3.30.200.20">
    <property type="entry name" value="Phosphorylase Kinase, domain 1"/>
    <property type="match status" value="1"/>
</dbReference>
<dbReference type="Gene3D" id="3.80.10.10">
    <property type="entry name" value="Ribonuclease Inhibitor"/>
    <property type="match status" value="1"/>
</dbReference>
<dbReference type="Gene3D" id="1.10.510.10">
    <property type="entry name" value="Transferase(Phosphotransferase) domain 1"/>
    <property type="match status" value="1"/>
</dbReference>
<dbReference type="InterPro" id="IPR000483">
    <property type="entry name" value="Cys-rich_flank_reg_C"/>
</dbReference>
<dbReference type="InterPro" id="IPR007110">
    <property type="entry name" value="Ig-like_dom"/>
</dbReference>
<dbReference type="InterPro" id="IPR036179">
    <property type="entry name" value="Ig-like_dom_sf"/>
</dbReference>
<dbReference type="InterPro" id="IPR013783">
    <property type="entry name" value="Ig-like_fold"/>
</dbReference>
<dbReference type="InterPro" id="IPR013098">
    <property type="entry name" value="Ig_I-set"/>
</dbReference>
<dbReference type="InterPro" id="IPR003599">
    <property type="entry name" value="Ig_sub"/>
</dbReference>
<dbReference type="InterPro" id="IPR013151">
    <property type="entry name" value="Immunoglobulin_dom"/>
</dbReference>
<dbReference type="InterPro" id="IPR011009">
    <property type="entry name" value="Kinase-like_dom_sf"/>
</dbReference>
<dbReference type="InterPro" id="IPR001611">
    <property type="entry name" value="Leu-rich_rpt"/>
</dbReference>
<dbReference type="InterPro" id="IPR032675">
    <property type="entry name" value="LRR_dom_sf"/>
</dbReference>
<dbReference type="InterPro" id="IPR000372">
    <property type="entry name" value="LRRNT"/>
</dbReference>
<dbReference type="InterPro" id="IPR020777">
    <property type="entry name" value="NTRK"/>
</dbReference>
<dbReference type="InterPro" id="IPR020446">
    <property type="entry name" value="NTRK3"/>
</dbReference>
<dbReference type="InterPro" id="IPR031635">
    <property type="entry name" value="NTRK_LRRCT"/>
</dbReference>
<dbReference type="InterPro" id="IPR000719">
    <property type="entry name" value="Prot_kinase_dom"/>
</dbReference>
<dbReference type="InterPro" id="IPR017441">
    <property type="entry name" value="Protein_kinase_ATP_BS"/>
</dbReference>
<dbReference type="InterPro" id="IPR050122">
    <property type="entry name" value="RTK"/>
</dbReference>
<dbReference type="InterPro" id="IPR001245">
    <property type="entry name" value="Ser-Thr/Tyr_kinase_cat_dom"/>
</dbReference>
<dbReference type="InterPro" id="IPR008266">
    <property type="entry name" value="Tyr_kinase_AS"/>
</dbReference>
<dbReference type="InterPro" id="IPR020635">
    <property type="entry name" value="Tyr_kinase_cat_dom"/>
</dbReference>
<dbReference type="InterPro" id="IPR002011">
    <property type="entry name" value="Tyr_kinase_rcpt_2_CS"/>
</dbReference>
<dbReference type="PANTHER" id="PTHR24416:SF66">
    <property type="entry name" value="NT-3 GROWTH FACTOR RECEPTOR"/>
    <property type="match status" value="1"/>
</dbReference>
<dbReference type="PANTHER" id="PTHR24416">
    <property type="entry name" value="TYROSINE-PROTEIN KINASE RECEPTOR"/>
    <property type="match status" value="1"/>
</dbReference>
<dbReference type="Pfam" id="PF07679">
    <property type="entry name" value="I-set"/>
    <property type="match status" value="1"/>
</dbReference>
<dbReference type="Pfam" id="PF00047">
    <property type="entry name" value="ig"/>
    <property type="match status" value="1"/>
</dbReference>
<dbReference type="Pfam" id="PF13855">
    <property type="entry name" value="LRR_8"/>
    <property type="match status" value="1"/>
</dbReference>
<dbReference type="Pfam" id="PF16920">
    <property type="entry name" value="LRRCT_2"/>
    <property type="match status" value="1"/>
</dbReference>
<dbReference type="Pfam" id="PF01462">
    <property type="entry name" value="LRRNT"/>
    <property type="match status" value="1"/>
</dbReference>
<dbReference type="Pfam" id="PF07714">
    <property type="entry name" value="PK_Tyr_Ser-Thr"/>
    <property type="match status" value="1"/>
</dbReference>
<dbReference type="PRINTS" id="PR01939">
    <property type="entry name" value="NTKRECEPTOR"/>
</dbReference>
<dbReference type="PRINTS" id="PR01942">
    <property type="entry name" value="NTKRECEPTOR3"/>
</dbReference>
<dbReference type="PRINTS" id="PR00109">
    <property type="entry name" value="TYRKINASE"/>
</dbReference>
<dbReference type="SMART" id="SM00409">
    <property type="entry name" value="IG"/>
    <property type="match status" value="1"/>
</dbReference>
<dbReference type="SMART" id="SM00082">
    <property type="entry name" value="LRRCT"/>
    <property type="match status" value="1"/>
</dbReference>
<dbReference type="SMART" id="SM00013">
    <property type="entry name" value="LRRNT"/>
    <property type="match status" value="1"/>
</dbReference>
<dbReference type="SMART" id="SM00219">
    <property type="entry name" value="TyrKc"/>
    <property type="match status" value="1"/>
</dbReference>
<dbReference type="SUPFAM" id="SSF48726">
    <property type="entry name" value="Immunoglobulin"/>
    <property type="match status" value="2"/>
</dbReference>
<dbReference type="SUPFAM" id="SSF52058">
    <property type="entry name" value="L domain-like"/>
    <property type="match status" value="1"/>
</dbReference>
<dbReference type="SUPFAM" id="SSF56112">
    <property type="entry name" value="Protein kinase-like (PK-like)"/>
    <property type="match status" value="1"/>
</dbReference>
<dbReference type="PROSITE" id="PS50835">
    <property type="entry name" value="IG_LIKE"/>
    <property type="match status" value="1"/>
</dbReference>
<dbReference type="PROSITE" id="PS51450">
    <property type="entry name" value="LRR"/>
    <property type="match status" value="1"/>
</dbReference>
<dbReference type="PROSITE" id="PS00107">
    <property type="entry name" value="PROTEIN_KINASE_ATP"/>
    <property type="match status" value="1"/>
</dbReference>
<dbReference type="PROSITE" id="PS50011">
    <property type="entry name" value="PROTEIN_KINASE_DOM"/>
    <property type="match status" value="1"/>
</dbReference>
<dbReference type="PROSITE" id="PS00109">
    <property type="entry name" value="PROTEIN_KINASE_TYR"/>
    <property type="match status" value="1"/>
</dbReference>
<dbReference type="PROSITE" id="PS00239">
    <property type="entry name" value="RECEPTOR_TYR_KIN_II"/>
    <property type="match status" value="1"/>
</dbReference>
<reference key="1">
    <citation type="journal article" date="2003" name="Proc. Natl. Acad. Sci. U.S.A.">
        <title>Neurotrophin 3 activation of TrkC induces Schwann cell migration through the c-Jun N-terminal kinase pathway.</title>
        <authorList>
            <person name="Yamauchi J."/>
            <person name="Chan J.R."/>
            <person name="Shooter E.M."/>
        </authorList>
    </citation>
    <scope>NUCLEOTIDE SEQUENCE [MRNA] (ISOFORM 1)</scope>
    <source>
        <strain>BALB/cJ</strain>
    </source>
</reference>
<reference key="2">
    <citation type="journal article" date="1998" name="J. Comp. Neurol.">
        <title>Differential expression of TrkC catalytic and noncatalytic isoforms suggests that they act independently or in association.</title>
        <authorList>
            <person name="Menn B."/>
            <person name="Timsit S."/>
            <person name="Calothy G."/>
            <person name="Lamballe F."/>
        </authorList>
    </citation>
    <scope>NUCLEOTIDE SEQUENCE [MRNA] (ISOFORMS 2 AND 3)</scope>
    <scope>TISSUE SPECIFICITY</scope>
    <source>
        <strain>C57BL/6J</strain>
        <tissue>Brain</tissue>
    </source>
</reference>
<reference key="3">
    <citation type="journal article" date="2004" name="Genome Res.">
        <title>The status, quality, and expansion of the NIH full-length cDNA project: the Mammalian Gene Collection (MGC).</title>
        <authorList>
            <consortium name="The MGC Project Team"/>
        </authorList>
    </citation>
    <scope>NUCLEOTIDE SEQUENCE [LARGE SCALE MRNA] (ISOFORM 3)</scope>
</reference>
<reference key="4">
    <citation type="journal article" date="2008" name="J. Proteome Res.">
        <title>Large-scale identification and evolution indexing of tyrosine phosphorylation sites from murine brain.</title>
        <authorList>
            <person name="Ballif B.A."/>
            <person name="Carey G.R."/>
            <person name="Sunyaev S.R."/>
            <person name="Gygi S.P."/>
        </authorList>
    </citation>
    <scope>PHOSPHORYLATION [LARGE SCALE ANALYSIS] AT TYR-516</scope>
    <scope>IDENTIFICATION BY MASS SPECTROMETRY [LARGE SCALE ANALYSIS]</scope>
    <source>
        <tissue>Brain</tissue>
    </source>
</reference>
<reference key="5">
    <citation type="journal article" date="2010" name="Cell">
        <title>A tissue-specific atlas of mouse protein phosphorylation and expression.</title>
        <authorList>
            <person name="Huttlin E.L."/>
            <person name="Jedrychowski M.P."/>
            <person name="Elias J.E."/>
            <person name="Goswami T."/>
            <person name="Rad R."/>
            <person name="Beausoleil S.A."/>
            <person name="Villen J."/>
            <person name="Haas W."/>
            <person name="Sowa M.E."/>
            <person name="Gygi S.P."/>
        </authorList>
    </citation>
    <scope>PHOSPHORYLATION [LARGE SCALE ANALYSIS] AT SER-493</scope>
    <scope>IDENTIFICATION BY MASS SPECTROMETRY [LARGE SCALE ANALYSIS]</scope>
    <source>
        <tissue>Brain</tissue>
        <tissue>Brown adipose tissue</tissue>
    </source>
</reference>
<reference key="6">
    <citation type="journal article" date="2013" name="J. Neurosci.">
        <title>p75 neurotrophin receptor is a clock gene that regulates oscillatory components of circadian and metabolic networks.</title>
        <authorList>
            <person name="Baeza-Raja B."/>
            <person name="Eckel-Mahan K."/>
            <person name="Zhang L."/>
            <person name="Vagena E."/>
            <person name="Tsigelny I.F."/>
            <person name="Sassone-Corsi P."/>
            <person name="Ptacek L.J."/>
            <person name="Akassoglou K."/>
        </authorList>
    </citation>
    <scope>INDUCTION</scope>
</reference>
<reference key="7">
    <citation type="journal article" date="2014" name="Nat. Commun.">
        <title>Structural basis for extracellular cis and trans RPTPsigma signal competition in synaptogenesis.</title>
        <authorList>
            <person name="Coles C.H."/>
            <person name="Mitakidis N."/>
            <person name="Zhang P."/>
            <person name="Elegheert J."/>
            <person name="Lu W."/>
            <person name="Stoker A.W."/>
            <person name="Nakagawa T."/>
            <person name="Craig A.M."/>
            <person name="Jones E.Y."/>
            <person name="Aricescu A.R."/>
        </authorList>
    </citation>
    <scope>INTERACTION WITH PTPRS</scope>
</reference>